<sequence length="136" mass="16321">MAALRYRRFLKLCEEWPVDETKRGRDLGAYLRQRVAQAFREGENTQIAEPEACDQMYESLARLHSNYYKHKYPRPRDTSFSGLSVEEYKLILSTDTLEEFQEMNKSMWKKLQEKFAPTRPEEKHKAWTRVLSRPRT</sequence>
<name>UQCC2_MOUSE</name>
<comment type="function">
    <text evidence="2 4">Required for the assembly of the ubiquinol-cytochrome c reductase complex (mitochondrial respiratory chain complex III or cytochrome b-c1 complex). Plays a role in the modulation of respiratory chain activities such as oxygen consumption and ATP production and via its modulation of the respiratory chain activity can regulate skeletal muscle differentiation and insulin secretion by pancreatic beta-cells. Involved in cytochrome b translation and/or stability.</text>
</comment>
<comment type="subunit">
    <text evidence="2 5">Interacts with UQCC1 (By similarity). Forms a complex, named COMB/coordinator of mitochondrial CYTB biogenesis, composed of UQCC1, UQCC2, UQCC4, UQCC5 and UQCC6; stabilizes nascent cytochrome b/MT-CYB and promotes its membrane insertion (PubMed:35977508). Forms a complex, named COMA, composed of UQCC1, UQCC2 and UQCC4; activates MT-CYB translation (PubMed:35977508). Forms a complex, named COMC, composed of UQCC1, UQCC2; UQCC3 and UQCC4; mediates MT-CYB hemylation and association with the first nuclear-encoded CIII subunit UQCRQ (PubMed:35977508).</text>
</comment>
<comment type="subcellular location">
    <subcellularLocation>
        <location evidence="1">Mitochondrion matrix</location>
        <location evidence="1">Mitochondrion nucleoid</location>
    </subcellularLocation>
    <subcellularLocation>
        <location evidence="4">Mitochondrion</location>
    </subcellularLocation>
    <subcellularLocation>
        <location evidence="4">Mitochondrion intermembrane space</location>
    </subcellularLocation>
    <subcellularLocation>
        <location evidence="4">Mitochondrion matrix</location>
    </subcellularLocation>
    <subcellularLocation>
        <location evidence="4">Mitochondrion inner membrane</location>
    </subcellularLocation>
    <text>Predominantly expressed in the mitochondrial inner membrane.</text>
</comment>
<comment type="tissue specificity">
    <text evidence="3">Widely expressed with highest levels in brain, liver, kidney, heart, skeletal muscle, thymus, testis and pancreas (at protein level).</text>
</comment>
<reference key="1">
    <citation type="journal article" date="2005" name="Science">
        <title>The transcriptional landscape of the mammalian genome.</title>
        <authorList>
            <person name="Carninci P."/>
            <person name="Kasukawa T."/>
            <person name="Katayama S."/>
            <person name="Gough J."/>
            <person name="Frith M.C."/>
            <person name="Maeda N."/>
            <person name="Oyama R."/>
            <person name="Ravasi T."/>
            <person name="Lenhard B."/>
            <person name="Wells C."/>
            <person name="Kodzius R."/>
            <person name="Shimokawa K."/>
            <person name="Bajic V.B."/>
            <person name="Brenner S.E."/>
            <person name="Batalov S."/>
            <person name="Forrest A.R."/>
            <person name="Zavolan M."/>
            <person name="Davis M.J."/>
            <person name="Wilming L.G."/>
            <person name="Aidinis V."/>
            <person name="Allen J.E."/>
            <person name="Ambesi-Impiombato A."/>
            <person name="Apweiler R."/>
            <person name="Aturaliya R.N."/>
            <person name="Bailey T.L."/>
            <person name="Bansal M."/>
            <person name="Baxter L."/>
            <person name="Beisel K.W."/>
            <person name="Bersano T."/>
            <person name="Bono H."/>
            <person name="Chalk A.M."/>
            <person name="Chiu K.P."/>
            <person name="Choudhary V."/>
            <person name="Christoffels A."/>
            <person name="Clutterbuck D.R."/>
            <person name="Crowe M.L."/>
            <person name="Dalla E."/>
            <person name="Dalrymple B.P."/>
            <person name="de Bono B."/>
            <person name="Della Gatta G."/>
            <person name="di Bernardo D."/>
            <person name="Down T."/>
            <person name="Engstrom P."/>
            <person name="Fagiolini M."/>
            <person name="Faulkner G."/>
            <person name="Fletcher C.F."/>
            <person name="Fukushima T."/>
            <person name="Furuno M."/>
            <person name="Futaki S."/>
            <person name="Gariboldi M."/>
            <person name="Georgii-Hemming P."/>
            <person name="Gingeras T.R."/>
            <person name="Gojobori T."/>
            <person name="Green R.E."/>
            <person name="Gustincich S."/>
            <person name="Harbers M."/>
            <person name="Hayashi Y."/>
            <person name="Hensch T.K."/>
            <person name="Hirokawa N."/>
            <person name="Hill D."/>
            <person name="Huminiecki L."/>
            <person name="Iacono M."/>
            <person name="Ikeo K."/>
            <person name="Iwama A."/>
            <person name="Ishikawa T."/>
            <person name="Jakt M."/>
            <person name="Kanapin A."/>
            <person name="Katoh M."/>
            <person name="Kawasawa Y."/>
            <person name="Kelso J."/>
            <person name="Kitamura H."/>
            <person name="Kitano H."/>
            <person name="Kollias G."/>
            <person name="Krishnan S.P."/>
            <person name="Kruger A."/>
            <person name="Kummerfeld S.K."/>
            <person name="Kurochkin I.V."/>
            <person name="Lareau L.F."/>
            <person name="Lazarevic D."/>
            <person name="Lipovich L."/>
            <person name="Liu J."/>
            <person name="Liuni S."/>
            <person name="McWilliam S."/>
            <person name="Madan Babu M."/>
            <person name="Madera M."/>
            <person name="Marchionni L."/>
            <person name="Matsuda H."/>
            <person name="Matsuzawa S."/>
            <person name="Miki H."/>
            <person name="Mignone F."/>
            <person name="Miyake S."/>
            <person name="Morris K."/>
            <person name="Mottagui-Tabar S."/>
            <person name="Mulder N."/>
            <person name="Nakano N."/>
            <person name="Nakauchi H."/>
            <person name="Ng P."/>
            <person name="Nilsson R."/>
            <person name="Nishiguchi S."/>
            <person name="Nishikawa S."/>
            <person name="Nori F."/>
            <person name="Ohara O."/>
            <person name="Okazaki Y."/>
            <person name="Orlando V."/>
            <person name="Pang K.C."/>
            <person name="Pavan W.J."/>
            <person name="Pavesi G."/>
            <person name="Pesole G."/>
            <person name="Petrovsky N."/>
            <person name="Piazza S."/>
            <person name="Reed J."/>
            <person name="Reid J.F."/>
            <person name="Ring B.Z."/>
            <person name="Ringwald M."/>
            <person name="Rost B."/>
            <person name="Ruan Y."/>
            <person name="Salzberg S.L."/>
            <person name="Sandelin A."/>
            <person name="Schneider C."/>
            <person name="Schoenbach C."/>
            <person name="Sekiguchi K."/>
            <person name="Semple C.A."/>
            <person name="Seno S."/>
            <person name="Sessa L."/>
            <person name="Sheng Y."/>
            <person name="Shibata Y."/>
            <person name="Shimada H."/>
            <person name="Shimada K."/>
            <person name="Silva D."/>
            <person name="Sinclair B."/>
            <person name="Sperling S."/>
            <person name="Stupka E."/>
            <person name="Sugiura K."/>
            <person name="Sultana R."/>
            <person name="Takenaka Y."/>
            <person name="Taki K."/>
            <person name="Tammoja K."/>
            <person name="Tan S.L."/>
            <person name="Tang S."/>
            <person name="Taylor M.S."/>
            <person name="Tegner J."/>
            <person name="Teichmann S.A."/>
            <person name="Ueda H.R."/>
            <person name="van Nimwegen E."/>
            <person name="Verardo R."/>
            <person name="Wei C.L."/>
            <person name="Yagi K."/>
            <person name="Yamanishi H."/>
            <person name="Zabarovsky E."/>
            <person name="Zhu S."/>
            <person name="Zimmer A."/>
            <person name="Hide W."/>
            <person name="Bult C."/>
            <person name="Grimmond S.M."/>
            <person name="Teasdale R.D."/>
            <person name="Liu E.T."/>
            <person name="Brusic V."/>
            <person name="Quackenbush J."/>
            <person name="Wahlestedt C."/>
            <person name="Mattick J.S."/>
            <person name="Hume D.A."/>
            <person name="Kai C."/>
            <person name="Sasaki D."/>
            <person name="Tomaru Y."/>
            <person name="Fukuda S."/>
            <person name="Kanamori-Katayama M."/>
            <person name="Suzuki M."/>
            <person name="Aoki J."/>
            <person name="Arakawa T."/>
            <person name="Iida J."/>
            <person name="Imamura K."/>
            <person name="Itoh M."/>
            <person name="Kato T."/>
            <person name="Kawaji H."/>
            <person name="Kawagashira N."/>
            <person name="Kawashima T."/>
            <person name="Kojima M."/>
            <person name="Kondo S."/>
            <person name="Konno H."/>
            <person name="Nakano K."/>
            <person name="Ninomiya N."/>
            <person name="Nishio T."/>
            <person name="Okada M."/>
            <person name="Plessy C."/>
            <person name="Shibata K."/>
            <person name="Shiraki T."/>
            <person name="Suzuki S."/>
            <person name="Tagami M."/>
            <person name="Waki K."/>
            <person name="Watahiki A."/>
            <person name="Okamura-Oho Y."/>
            <person name="Suzuki H."/>
            <person name="Kawai J."/>
            <person name="Hayashizaki Y."/>
        </authorList>
    </citation>
    <scope>NUCLEOTIDE SEQUENCE [LARGE SCALE MRNA]</scope>
    <source>
        <strain>C57BL/6J</strain>
        <tissue>Hippocampus</tissue>
        <tissue>Pancreas</tissue>
    </source>
</reference>
<reference key="2">
    <citation type="journal article" date="2004" name="Genome Res.">
        <title>The status, quality, and expansion of the NIH full-length cDNA project: the Mammalian Gene Collection (MGC).</title>
        <authorList>
            <consortium name="The MGC Project Team"/>
        </authorList>
    </citation>
    <scope>NUCLEOTIDE SEQUENCE [LARGE SCALE MRNA]</scope>
    <source>
        <strain>C57BL/6J</strain>
        <tissue>Mammary gland</tissue>
    </source>
</reference>
<reference key="3">
    <citation type="journal article" date="2009" name="J. Biochem.">
        <title>Association of a novel mitochondrial protein M19 with mitochondrial nucleoids.</title>
        <authorList>
            <person name="Sumitani M."/>
            <person name="Kasashima K."/>
            <person name="Ohta E."/>
            <person name="Kang D."/>
            <person name="Endo H."/>
        </authorList>
    </citation>
    <scope>TISSUE SPECIFICITY</scope>
</reference>
<reference key="4">
    <citation type="journal article" date="2010" name="Cell">
        <title>A tissue-specific atlas of mouse protein phosphorylation and expression.</title>
        <authorList>
            <person name="Huttlin E.L."/>
            <person name="Jedrychowski M.P."/>
            <person name="Elias J.E."/>
            <person name="Goswami T."/>
            <person name="Rad R."/>
            <person name="Beausoleil S.A."/>
            <person name="Villen J."/>
            <person name="Haas W."/>
            <person name="Sowa M.E."/>
            <person name="Gygi S.P."/>
        </authorList>
    </citation>
    <scope>IDENTIFICATION BY MASS SPECTROMETRY [LARGE SCALE ANALYSIS]</scope>
    <source>
        <tissue>Brain</tissue>
        <tissue>Brown adipose tissue</tissue>
        <tissue>Heart</tissue>
        <tissue>Kidney</tissue>
        <tissue>Liver</tissue>
        <tissue>Lung</tissue>
        <tissue>Testis</tissue>
    </source>
</reference>
<reference key="5">
    <citation type="journal article" date="2012" name="PLoS ONE">
        <title>M19 modulates skeletal muscle differentiation and insulin secretion in pancreatic beta-cells through modulation of respiratory chain activity.</title>
        <authorList>
            <person name="Cambier L."/>
            <person name="Rassam P."/>
            <person name="Chabi B."/>
            <person name="Mezghenna K."/>
            <person name="Gross R."/>
            <person name="Eveno E."/>
            <person name="Auffray C."/>
            <person name="Wrutniak-Cabello C."/>
            <person name="Lajoix A.D."/>
            <person name="Pomies P."/>
        </authorList>
    </citation>
    <scope>FUNCTION</scope>
    <scope>SUBCELLULAR LOCATION</scope>
    <scope>TRANSIT PEPTIDE CLEAVAGE SITE</scope>
</reference>
<reference key="6">
    <citation type="journal article" date="2022" name="Cell Rep.">
        <title>Mitochondrial microproteins link metabolic cues to respiratory chain biogenesis.</title>
        <authorList>
            <person name="Liang C."/>
            <person name="Zhang S."/>
            <person name="Robinson D."/>
            <person name="Ploeg M.V."/>
            <person name="Wilson R."/>
            <person name="Nah J."/>
            <person name="Taylor D."/>
            <person name="Beh S."/>
            <person name="Lim R."/>
            <person name="Sun L."/>
            <person name="Muoio D.M."/>
            <person name="Stroud D.A."/>
            <person name="Ho L."/>
        </authorList>
    </citation>
    <scope>SUBUNIT</scope>
</reference>
<keyword id="KW-0472">Membrane</keyword>
<keyword id="KW-0496">Mitochondrion</keyword>
<keyword id="KW-0999">Mitochondrion inner membrane</keyword>
<keyword id="KW-1135">Mitochondrion nucleoid</keyword>
<keyword id="KW-1185">Reference proteome</keyword>
<keyword id="KW-0809">Transit peptide</keyword>
<accession>Q9CQY6</accession>
<organism>
    <name type="scientific">Mus musculus</name>
    <name type="common">Mouse</name>
    <dbReference type="NCBI Taxonomy" id="10090"/>
    <lineage>
        <taxon>Eukaryota</taxon>
        <taxon>Metazoa</taxon>
        <taxon>Chordata</taxon>
        <taxon>Craniata</taxon>
        <taxon>Vertebrata</taxon>
        <taxon>Euteleostomi</taxon>
        <taxon>Mammalia</taxon>
        <taxon>Eutheria</taxon>
        <taxon>Euarchontoglires</taxon>
        <taxon>Glires</taxon>
        <taxon>Rodentia</taxon>
        <taxon>Myomorpha</taxon>
        <taxon>Muroidea</taxon>
        <taxon>Muridae</taxon>
        <taxon>Murinae</taxon>
        <taxon>Mus</taxon>
        <taxon>Mus</taxon>
    </lineage>
</organism>
<proteinExistence type="evidence at protein level"/>
<protein>
    <recommendedName>
        <fullName>Ubiquinol-cytochrome c reductase complex assembly factor 2</fullName>
    </recommendedName>
    <alternativeName>
        <fullName>Mitochondrial nucleoid factor 1</fullName>
    </alternativeName>
    <alternativeName>
        <fullName>Mitochondrial protein M19</fullName>
    </alternativeName>
</protein>
<dbReference type="EMBL" id="AK013521">
    <property type="protein sequence ID" value="BAB28896.1"/>
    <property type="molecule type" value="mRNA"/>
</dbReference>
<dbReference type="EMBL" id="AK019014">
    <property type="protein sequence ID" value="BAB31511.1"/>
    <property type="molecule type" value="mRNA"/>
</dbReference>
<dbReference type="EMBL" id="BC030629">
    <property type="protein sequence ID" value="AAH30629.1"/>
    <property type="molecule type" value="mRNA"/>
</dbReference>
<dbReference type="CCDS" id="CCDS28561.1"/>
<dbReference type="RefSeq" id="NP_080339.1">
    <property type="nucleotide sequence ID" value="NM_026063.2"/>
</dbReference>
<dbReference type="BioGRID" id="212059">
    <property type="interactions" value="10"/>
</dbReference>
<dbReference type="FunCoup" id="Q9CQY6">
    <property type="interactions" value="889"/>
</dbReference>
<dbReference type="STRING" id="10090.ENSMUSP00000025045"/>
<dbReference type="PhosphoSitePlus" id="Q9CQY6"/>
<dbReference type="SwissPalm" id="Q9CQY6"/>
<dbReference type="PaxDb" id="10090-ENSMUSP00000025045"/>
<dbReference type="PeptideAtlas" id="Q9CQY6"/>
<dbReference type="ProteomicsDB" id="297944"/>
<dbReference type="Pumba" id="Q9CQY6"/>
<dbReference type="Antibodypedia" id="64241">
    <property type="antibodies" value="54 antibodies from 17 providers"/>
</dbReference>
<dbReference type="DNASU" id="67267"/>
<dbReference type="Ensembl" id="ENSMUST00000025045.15">
    <property type="protein sequence ID" value="ENSMUSP00000025045.9"/>
    <property type="gene ID" value="ENSMUSG00000024208.17"/>
</dbReference>
<dbReference type="GeneID" id="67267"/>
<dbReference type="KEGG" id="mmu:67267"/>
<dbReference type="UCSC" id="uc008bfk.1">
    <property type="organism name" value="mouse"/>
</dbReference>
<dbReference type="AGR" id="MGI:1914517"/>
<dbReference type="CTD" id="84300"/>
<dbReference type="MGI" id="MGI:1914517">
    <property type="gene designation" value="Uqcc2"/>
</dbReference>
<dbReference type="VEuPathDB" id="HostDB:ENSMUSG00000024208"/>
<dbReference type="eggNOG" id="ENOG502S2M4">
    <property type="taxonomic scope" value="Eukaryota"/>
</dbReference>
<dbReference type="GeneTree" id="ENSGT00510000048041"/>
<dbReference type="InParanoid" id="Q9CQY6"/>
<dbReference type="OMA" id="CEEWPKD"/>
<dbReference type="OrthoDB" id="6266314at2759"/>
<dbReference type="PhylomeDB" id="Q9CQY6"/>
<dbReference type="TreeFam" id="TF333267"/>
<dbReference type="BioGRID-ORCS" id="67267">
    <property type="hits" value="22 hits in 80 CRISPR screens"/>
</dbReference>
<dbReference type="ChiTaRS" id="Uqcc2">
    <property type="organism name" value="mouse"/>
</dbReference>
<dbReference type="PRO" id="PR:Q9CQY6"/>
<dbReference type="Proteomes" id="UP000000589">
    <property type="component" value="Chromosome 17"/>
</dbReference>
<dbReference type="RNAct" id="Q9CQY6">
    <property type="molecule type" value="protein"/>
</dbReference>
<dbReference type="Bgee" id="ENSMUSG00000024208">
    <property type="expression patterns" value="Expressed in spermatid and 264 other cell types or tissues"/>
</dbReference>
<dbReference type="ExpressionAtlas" id="Q9CQY6">
    <property type="expression patterns" value="baseline and differential"/>
</dbReference>
<dbReference type="GO" id="GO:0005743">
    <property type="term" value="C:mitochondrial inner membrane"/>
    <property type="evidence" value="ECO:0000314"/>
    <property type="project" value="UniProtKB"/>
</dbReference>
<dbReference type="GO" id="GO:0005758">
    <property type="term" value="C:mitochondrial intermembrane space"/>
    <property type="evidence" value="ECO:0000314"/>
    <property type="project" value="UniProtKB"/>
</dbReference>
<dbReference type="GO" id="GO:0005759">
    <property type="term" value="C:mitochondrial matrix"/>
    <property type="evidence" value="ECO:0000314"/>
    <property type="project" value="UniProtKB"/>
</dbReference>
<dbReference type="GO" id="GO:0042645">
    <property type="term" value="C:mitochondrial nucleoid"/>
    <property type="evidence" value="ECO:0000250"/>
    <property type="project" value="UniProtKB"/>
</dbReference>
<dbReference type="GO" id="GO:0005739">
    <property type="term" value="C:mitochondrion"/>
    <property type="evidence" value="ECO:0000314"/>
    <property type="project" value="UniProtKB"/>
</dbReference>
<dbReference type="GO" id="GO:0016604">
    <property type="term" value="C:nuclear body"/>
    <property type="evidence" value="ECO:0007669"/>
    <property type="project" value="Ensembl"/>
</dbReference>
<dbReference type="GO" id="GO:0034551">
    <property type="term" value="P:mitochondrial respiratory chain complex III assembly"/>
    <property type="evidence" value="ECO:0000250"/>
    <property type="project" value="UniProtKB"/>
</dbReference>
<dbReference type="GO" id="GO:0070131">
    <property type="term" value="P:positive regulation of mitochondrial translation"/>
    <property type="evidence" value="ECO:0000250"/>
    <property type="project" value="UniProtKB"/>
</dbReference>
<dbReference type="GO" id="GO:0050796">
    <property type="term" value="P:regulation of insulin secretion"/>
    <property type="evidence" value="ECO:0000315"/>
    <property type="project" value="UniProtKB"/>
</dbReference>
<dbReference type="GO" id="GO:0002082">
    <property type="term" value="P:regulation of oxidative phosphorylation"/>
    <property type="evidence" value="ECO:0000315"/>
    <property type="project" value="UniProtKB"/>
</dbReference>
<dbReference type="GO" id="GO:2001014">
    <property type="term" value="P:regulation of skeletal muscle cell differentiation"/>
    <property type="evidence" value="ECO:0000315"/>
    <property type="project" value="UniProtKB"/>
</dbReference>
<dbReference type="InterPro" id="IPR037698">
    <property type="entry name" value="UQCC2"/>
</dbReference>
<dbReference type="PANTHER" id="PTHR34260">
    <property type="entry name" value="UBIQUINOL-CYTOCHROME-C REDUCTASE COMPLEX ASSEMBLY FACTOR 2"/>
    <property type="match status" value="1"/>
</dbReference>
<dbReference type="PANTHER" id="PTHR34260:SF1">
    <property type="entry name" value="UBIQUINOL-CYTOCHROME-C REDUCTASE COMPLEX ASSEMBLY FACTOR 2"/>
    <property type="match status" value="1"/>
</dbReference>
<dbReference type="Pfam" id="PF20180">
    <property type="entry name" value="UQCC2_CBP6"/>
    <property type="match status" value="1"/>
</dbReference>
<feature type="transit peptide" description="Mitochondrion" evidence="4">
    <location>
        <begin position="1"/>
        <end position="13"/>
    </location>
</feature>
<feature type="chain" id="PRO_0000089527" description="Ubiquinol-cytochrome c reductase complex assembly factor 2">
    <location>
        <begin position="14"/>
        <end position="136"/>
    </location>
</feature>
<gene>
    <name type="primary">Uqcc2</name>
    <name type="synonym">Mnf1</name>
</gene>
<evidence type="ECO:0000250" key="1"/>
<evidence type="ECO:0000250" key="2">
    <source>
        <dbReference type="UniProtKB" id="Q9BRT2"/>
    </source>
</evidence>
<evidence type="ECO:0000269" key="3">
    <source>
    </source>
</evidence>
<evidence type="ECO:0000269" key="4">
    <source>
    </source>
</evidence>
<evidence type="ECO:0000269" key="5">
    <source>
    </source>
</evidence>